<comment type="function">
    <molecule>Fusion glycoprotein F0</molecule>
    <text evidence="1">Inactive precursor that is cleaved at two sites by a furin-like protease to give rise to the mature F1 and F2 fusion glycoproteins.</text>
</comment>
<comment type="function">
    <molecule>Fusion glycoprotein F1</molecule>
    <text evidence="1">Class I viral fusion protein. Under the current model, the protein has at least 3 conformational states: pre-fusion native state, pre-hairpin intermediate state, and post-fusion hairpin state. During viral and plasma cell membrane fusion, the coiled coil regions assume a trimer-of-hairpins structure, positioning the fusion peptide in close proximity to the C-terminal region of the ectodomain. The formation of this structure appears to drive apposition and subsequent fusion of viral and cellular membranes leading to delivery of the nucleocapsid into the cytoplasm. This fusion is pH independent and occurs at the plasma or endosomal membrane. The trimer of F1-F2 (F protein) also facilitates the attachment and entry into the host cell. Later in infection, F protein expressed at the plasma membrane of infected cells can mediate fusion with adjacent cells to form syncytia, a cytopathic effect that could lead to tissue necrosis.</text>
</comment>
<comment type="function">
    <molecule>Fusion glycoprotein F2</molecule>
    <text evidence="1">Major determinant of the species specificity of RSV infection. The trimer of F1-F2 (F protein) also facilitates the attachment and entry into the host cell. Later in infection, F protein expressed at the plasma membrane of infected cells can mediate fusion with adjacent cells to form syncytia, a cytopathic effect that could lead to tissue necrosis.</text>
</comment>
<comment type="subunit">
    <molecule>Fusion glycoprotein F1</molecule>
    <text evidence="1">Homotrimer. Heterodimer with fusion protein F2; disulfide-linked. Part of a complex composed of F1, F2 and G glycoproteins. As a heterodimer with F2, interacts with host RHOA; this interaction facilitates virus-induced syncytium formation.</text>
</comment>
<comment type="subunit">
    <molecule>Fusion glycoprotein F2</molecule>
    <text evidence="1">Homotrimer. Heterodimer with fusion protein F1; disulfide-linked. Part of a complex composed of F1, F2 and G glycoproteins. As a heterodimer with F1, interacts with host RHOA; this interaction facilitates virus-induced syncytium formation.</text>
</comment>
<comment type="subcellular location">
    <molecule>Fusion glycoprotein F0</molecule>
    <subcellularLocation>
        <location evidence="1">Host Golgi apparatus membrane</location>
        <topology evidence="1">Single-pass membrane protein</topology>
    </subcellularLocation>
</comment>
<comment type="subcellular location">
    <molecule>Fusion glycoprotein F1</molecule>
    <subcellularLocation>
        <location evidence="1">Virion membrane</location>
        <topology evidence="1">Single-pass type I membrane protein</topology>
    </subcellularLocation>
    <subcellularLocation>
        <location evidence="1">Host cell membrane</location>
        <topology evidence="1">Single-pass membrane protein</topology>
    </subcellularLocation>
    <text evidence="1">Localized at the host apical membrane.</text>
</comment>
<comment type="subcellular location">
    <molecule>Fusion glycoprotein F2</molecule>
    <subcellularLocation>
        <location evidence="1">Virion membrane</location>
    </subcellularLocation>
    <subcellularLocation>
        <location evidence="1">Host cell membrane</location>
    </subcellularLocation>
    <text evidence="1">Localized at the host apical membrane.</text>
</comment>
<comment type="domain">
    <molecule>Fusion glycoprotein F0</molecule>
    <text evidence="1 2">The N-terminus is a hydrophobic fusion peptide that inserts into the target host membrane (By similarity). It is buried in the center of the trimer cavity before cleavage by host furin. The coiled coil (heptad repeat) regions are probably involved in homotrimerization, heterodimerization and in the formation of a fusion-active hairpin structure (By similarity).</text>
</comment>
<comment type="domain">
    <molecule>Fusion glycoprotein F1</molecule>
    <text evidence="1 2">The N-terminus is a hydrophobic fusion peptide that inserts into the target host membrane (By similarity). It is buried in the center of the trimer cavity before cleavage by host furin. The coiled coil (heptad repeat) regions are probably involved in homotrimerization, heterodimerization and in the formation of a fusion-active hairpin structure (By similarity).</text>
</comment>
<comment type="PTM">
    <molecule>Fusion glycoprotein F0</molecule>
    <text evidence="1">The F glycoprotein is synthesized as a F0 inactive precursor that is heavily N-glycosylated and processed at two sites by a host furin-like protease probably in the Golgi. The cleavage site between p27 and F1 may occur after endocytosis to yield the mature F1 and F2 proteins. Both cleavages are required for membrane fusion and p27 is released from the processed protein.</text>
</comment>
<comment type="similarity">
    <text evidence="4">Belongs to the paramyxoviruses fusion glycoprotein family.</text>
</comment>
<dbReference type="EMBL" id="M82816">
    <property type="protein sequence ID" value="AAA42804.1"/>
    <property type="molecule type" value="mRNA"/>
</dbReference>
<dbReference type="EMBL" id="AF295543">
    <property type="protein sequence ID" value="AAL49399.1"/>
    <property type="molecule type" value="Genomic_RNA"/>
</dbReference>
<dbReference type="EMBL" id="AF295544">
    <property type="protein sequence ID" value="AAL49410.1"/>
    <property type="molecule type" value="Genomic_RNA"/>
</dbReference>
<dbReference type="PIR" id="JQ1481">
    <property type="entry name" value="VGNZBA"/>
</dbReference>
<dbReference type="SMR" id="P29791"/>
<dbReference type="GlyCosmos" id="P29791">
    <property type="glycosylation" value="4 sites, No reported glycans"/>
</dbReference>
<dbReference type="Proteomes" id="UP000007616">
    <property type="component" value="Genome"/>
</dbReference>
<dbReference type="GO" id="GO:0044178">
    <property type="term" value="C:host cell Golgi membrane"/>
    <property type="evidence" value="ECO:0007669"/>
    <property type="project" value="UniProtKB-SubCell"/>
</dbReference>
<dbReference type="GO" id="GO:0020002">
    <property type="term" value="C:host cell plasma membrane"/>
    <property type="evidence" value="ECO:0007669"/>
    <property type="project" value="UniProtKB-SubCell"/>
</dbReference>
<dbReference type="GO" id="GO:0016020">
    <property type="term" value="C:membrane"/>
    <property type="evidence" value="ECO:0007669"/>
    <property type="project" value="UniProtKB-KW"/>
</dbReference>
<dbReference type="GO" id="GO:0019031">
    <property type="term" value="C:viral envelope"/>
    <property type="evidence" value="ECO:0007669"/>
    <property type="project" value="UniProtKB-KW"/>
</dbReference>
<dbReference type="GO" id="GO:0055036">
    <property type="term" value="C:virion membrane"/>
    <property type="evidence" value="ECO:0007669"/>
    <property type="project" value="UniProtKB-SubCell"/>
</dbReference>
<dbReference type="GO" id="GO:0098670">
    <property type="term" value="P:entry receptor-mediated virion attachment to host cell"/>
    <property type="evidence" value="ECO:0007669"/>
    <property type="project" value="UniProtKB-KW"/>
</dbReference>
<dbReference type="GO" id="GO:0019064">
    <property type="term" value="P:fusion of virus membrane with host plasma membrane"/>
    <property type="evidence" value="ECO:0007669"/>
    <property type="project" value="UniProtKB-KW"/>
</dbReference>
<dbReference type="GO" id="GO:0046718">
    <property type="term" value="P:symbiont entry into host cell"/>
    <property type="evidence" value="ECO:0007669"/>
    <property type="project" value="UniProtKB-KW"/>
</dbReference>
<dbReference type="GO" id="GO:0060141">
    <property type="term" value="P:symbiont-mediated induction of syncytium formation"/>
    <property type="evidence" value="ECO:0007669"/>
    <property type="project" value="UniProtKB-KW"/>
</dbReference>
<dbReference type="FunFam" id="1.10.287.2480:FF:000001">
    <property type="entry name" value="Fusion glycoprotein F0"/>
    <property type="match status" value="1"/>
</dbReference>
<dbReference type="Gene3D" id="1.10.287.2480">
    <property type="match status" value="2"/>
</dbReference>
<dbReference type="Gene3D" id="6.10.250.1160">
    <property type="match status" value="1"/>
</dbReference>
<dbReference type="Gene3D" id="6.20.370.50">
    <property type="match status" value="1"/>
</dbReference>
<dbReference type="InterPro" id="IPR000776">
    <property type="entry name" value="Fusion_F0_Paramyxovir"/>
</dbReference>
<dbReference type="InterPro" id="IPR013055">
    <property type="entry name" value="Tachy_Neuro_lke_CS"/>
</dbReference>
<dbReference type="Pfam" id="PF00523">
    <property type="entry name" value="Fusion_gly"/>
    <property type="match status" value="1"/>
</dbReference>
<dbReference type="SUPFAM" id="SSF58069">
    <property type="entry name" value="Virus ectodomain"/>
    <property type="match status" value="2"/>
</dbReference>
<protein>
    <recommendedName>
        <fullName>Fusion glycoprotein F0</fullName>
    </recommendedName>
    <component>
        <recommendedName>
            <fullName evidence="1">Fusion glycoprotein F2</fullName>
            <shortName>F2</shortName>
        </recommendedName>
    </component>
    <component>
        <recommendedName>
            <fullName evidence="1">p27</fullName>
        </recommendedName>
        <alternativeName>
            <fullName>Intervening segment</fullName>
        </alternativeName>
        <alternativeName>
            <fullName>Pep27</fullName>
        </alternativeName>
        <alternativeName>
            <fullName>Peptide 27</fullName>
        </alternativeName>
    </component>
    <component>
        <recommendedName>
            <fullName evidence="1">Fusion glycoprotein F1</fullName>
            <shortName>F1</shortName>
        </recommendedName>
    </component>
</protein>
<reference key="1">
    <citation type="journal article" date="1992" name="J. Gen. Virol.">
        <title>Sequence analysis of M2 mRNA of bovine respiratory syncytial virus obtained from an F-M2 dicistronic mRNA suggests structural homology with that of human respiratory syncytial virus.</title>
        <authorList>
            <person name="Zamora M."/>
            <person name="Samal S.K."/>
        </authorList>
    </citation>
    <scope>NUCLEOTIDE SEQUENCE [MRNA]</scope>
</reference>
<reference key="2">
    <citation type="journal article" date="2001" name="Virus Genes">
        <title>Rescue of bovine respiratory syncytial virus from cloned cDNA: entire genome sequence of BRSV strain A51908.</title>
        <authorList>
            <person name="Yunus A.S."/>
            <person name="Khattar S.K."/>
            <person name="Collins P.L."/>
            <person name="Samal S.K."/>
        </authorList>
    </citation>
    <scope>NUCLEOTIDE SEQUENCE [GENOMIC RNA]</scope>
    <source>
        <strain>A51908</strain>
        <strain>ATCC 51908</strain>
    </source>
</reference>
<reference key="3">
    <citation type="journal article" date="2001" name="J. Gen. Virol.">
        <title>Recombinant bovine respiratory syncytial virus with deletions of the G or SH genes: G and F proteins bind heparin.</title>
        <authorList>
            <person name="Karger A."/>
            <person name="Schmidt U."/>
            <person name="Buchholz U.J."/>
        </authorList>
    </citation>
    <scope>HEPARAN SULFATE BINDING</scope>
</reference>
<organism>
    <name type="scientific">Bovine respiratory syncytial virus (strain A51908)</name>
    <name type="common">BRS</name>
    <dbReference type="NCBI Taxonomy" id="11247"/>
    <lineage>
        <taxon>Viruses</taxon>
        <taxon>Riboviria</taxon>
        <taxon>Orthornavirae</taxon>
        <taxon>Negarnaviricota</taxon>
        <taxon>Haploviricotina</taxon>
        <taxon>Monjiviricetes</taxon>
        <taxon>Mononegavirales</taxon>
        <taxon>Pneumoviridae</taxon>
        <taxon>Orthopneumovirus</taxon>
        <taxon>Orthopneumovirus bovis</taxon>
        <taxon>bovine respiratory syncytial virus</taxon>
    </lineage>
</organism>
<name>FUS_BRSVA</name>
<gene>
    <name type="primary">F</name>
</gene>
<evidence type="ECO:0000250" key="1">
    <source>
        <dbReference type="UniProtKB" id="P03420"/>
    </source>
</evidence>
<evidence type="ECO:0000250" key="2">
    <source>
        <dbReference type="UniProtKB" id="P11209"/>
    </source>
</evidence>
<evidence type="ECO:0000255" key="3"/>
<evidence type="ECO:0000305" key="4"/>
<sequence>MATTTMRMIISIILISTYVPHITLCQNITEEFYQSTCSAVSRGYLSALRTGWYTSVVTIELSKIQKNVCNGTDSKVKLIKQELERYNNAVAELQSLMQNEPTSSSRAKRGIPESIHYTRNSTKKFYGLMGKKRKRRFLGFLLGIGSAIASGVAVSKVLHLEGEVNKIKNALLSTNKAVVSLSNGVSVLTSKVLDLKNYIDKELLPKVNNHDCRISNIATVIEFQQKNNRLLEIAREFSVNAGITTPLSTYMLTNSELLSIINDMPITNDQKKLMSVCQIVRQQSYSIMSVLREVIAYVVQLPLYGVIDTPCWKLHTSPLCTTDNKEGSNICLTRTDRGWYCDNAGSVSFFPQAETCKVQSNRVFCDTMNSLTLPTDVNLCNTDIFNSKYDCKIMTSKTDISSSVITSIGAIVSCYGKTKCTASNKNRGIIKTFSNGCDYVSNKGVDTVSVGNTLYYVNKLEGKALYIKGEPIINYYNPLVFPSDEFDASIAQVNAKINQSLAFIRRSDELLHSVDVGKSTTNVVITTIIIVIVVVILMLITVGLLFYCKTRSTPIMLGKDQLSSINNLSFSK</sequence>
<feature type="signal peptide" evidence="3">
    <location>
        <begin position="1"/>
        <end position="25"/>
    </location>
</feature>
<feature type="chain" id="PRO_0000039225" description="Fusion glycoprotein F0">
    <location>
        <begin position="26"/>
        <end position="572"/>
    </location>
</feature>
<feature type="chain" id="PRO_0000039226" description="Fusion glycoprotein F2">
    <location>
        <begin position="26"/>
        <end position="109"/>
    </location>
</feature>
<feature type="peptide" id="PRO_0000432658" description="p27" evidence="1">
    <location>
        <begin position="110"/>
        <end position="136"/>
    </location>
</feature>
<feature type="chain" id="PRO_0000039227" description="Fusion glycoprotein F1">
    <location>
        <begin position="137"/>
        <end position="572"/>
    </location>
</feature>
<feature type="topological domain" description="Extracellular" evidence="1">
    <location>
        <begin position="26"/>
        <end position="522"/>
    </location>
</feature>
<feature type="transmembrane region" description="Helical" evidence="1">
    <location>
        <begin position="523"/>
        <end position="548"/>
    </location>
</feature>
<feature type="topological domain" description="Cytoplasmic" evidence="1">
    <location>
        <begin position="549"/>
        <end position="572"/>
    </location>
</feature>
<feature type="region of interest" description="Fusion peptide" evidence="2">
    <location>
        <begin position="137"/>
        <end position="157"/>
    </location>
</feature>
<feature type="coiled-coil region" evidence="2">
    <location>
        <begin position="76"/>
        <end position="96"/>
    </location>
</feature>
<feature type="coiled-coil region" evidence="2">
    <location>
        <begin position="156"/>
        <end position="207"/>
    </location>
</feature>
<feature type="coiled-coil region" evidence="2">
    <location>
        <begin position="479"/>
        <end position="514"/>
    </location>
</feature>
<feature type="site" description="Cleavage; by host furin-like protease" evidence="1">
    <location>
        <begin position="109"/>
        <end position="110"/>
    </location>
</feature>
<feature type="site" description="Cleavage; by host furin-like protease" evidence="1">
    <location>
        <begin position="136"/>
        <end position="137"/>
    </location>
</feature>
<feature type="lipid moiety-binding region" description="S-palmitoyl cysteine; by host" evidence="1">
    <location>
        <position position="548"/>
    </location>
</feature>
<feature type="glycosylation site" description="N-linked (GlcNAc...) asparagine; by host" evidence="1">
    <location>
        <position position="27"/>
    </location>
</feature>
<feature type="glycosylation site" description="N-linked (GlcNAc...) asparagine; by host" evidence="1">
    <location>
        <position position="70"/>
    </location>
</feature>
<feature type="glycosylation site" description="N-linked (GlcNAc...) asparagine; by host" evidence="3">
    <location>
        <position position="120"/>
    </location>
</feature>
<feature type="glycosylation site" description="N-linked (GlcNAc...) asparagine; by host" evidence="1">
    <location>
        <position position="498"/>
    </location>
</feature>
<feature type="disulfide bond" description="Interchain (between F2 and F1 chains)" evidence="1">
    <location>
        <begin position="37"/>
        <end position="437"/>
    </location>
</feature>
<feature type="disulfide bond" description="Interchain (between F2 and F1 chains)" evidence="1">
    <location>
        <begin position="69"/>
        <end position="212"/>
    </location>
</feature>
<feature type="disulfide bond" evidence="1">
    <location>
        <begin position="311"/>
        <end position="341"/>
    </location>
</feature>
<feature type="disulfide bond" evidence="1">
    <location>
        <begin position="320"/>
        <end position="331"/>
    </location>
</feature>
<feature type="disulfide bond" evidence="1">
    <location>
        <begin position="356"/>
        <end position="365"/>
    </location>
</feature>
<feature type="disulfide bond" evidence="1">
    <location>
        <begin position="380"/>
        <end position="391"/>
    </location>
</feature>
<feature type="disulfide bond" evidence="1">
    <location>
        <begin position="414"/>
        <end position="420"/>
    </location>
</feature>
<feature type="sequence variant" description="In strain: ATCC 51908.">
    <original>T</original>
    <variation>A</variation>
    <location>
        <position position="5"/>
    </location>
</feature>
<feature type="sequence variant" description="In strain: ATCC 51908.">
    <original>L</original>
    <variation>F</variation>
    <location>
        <position position="14"/>
    </location>
</feature>
<feature type="sequence variant" description="In strain: ATCC 51908.">
    <original>P</original>
    <variation>T</variation>
    <location>
        <position position="20"/>
    </location>
</feature>
<feature type="sequence variant" description="In strain: ATCC 51908.">
    <original>G</original>
    <variation>S</variation>
    <location>
        <position position="71"/>
    </location>
</feature>
<feature type="sequence variant">
    <original>A</original>
    <variation>V</variation>
    <location>
        <position position="91"/>
    </location>
</feature>
<feature type="sequence variant" description="In strain: ATCC 51908.">
    <original>TSS</original>
    <variation>ASF</variation>
    <location>
        <begin position="102"/>
        <end position="104"/>
    </location>
</feature>
<feature type="sequence variant" description="In strain: ATCC 51908.">
    <original>S</original>
    <variation>L</variation>
    <location>
        <position position="114"/>
    </location>
</feature>
<feature type="sequence variant" description="In strain: ATCC 51908.">
    <original>NIA</original>
    <variation>KIE</variation>
    <location>
        <begin position="216"/>
        <end position="218"/>
    </location>
</feature>
<feature type="sequence variant" description="In strain: ATCC 51908.">
    <original>I</original>
    <variation>L</variation>
    <location>
        <position position="260"/>
    </location>
</feature>
<feature type="sequence variant">
    <original>VC</original>
    <variation>SNV</variation>
    <location>
        <begin position="276"/>
        <end position="277"/>
    </location>
</feature>
<feature type="sequence variant">
    <original>LR</original>
    <variation>VKE</variation>
    <location>
        <begin position="291"/>
        <end position="292"/>
    </location>
</feature>
<feature type="sequence variant" description="In strain: ATCC 51908.">
    <original>L</original>
    <variation>I</variation>
    <location>
        <position position="303"/>
    </location>
</feature>
<feature type="sequence variant">
    <original>K</original>
    <variation>E</variation>
    <location>
        <position position="325"/>
    </location>
</feature>
<feature type="sequence variant" description="In strain: ATCC 51908.">
    <original>A</original>
    <variation>T</variation>
    <location>
        <position position="353"/>
    </location>
</feature>
<feature type="sequence variant">
    <original>S</original>
    <variation>A</variation>
    <location>
        <position position="387"/>
    </location>
</feature>
<feature type="sequence variant" description="In strain: ATCC 51908.">
    <original>S</original>
    <variation>T</variation>
    <location>
        <position position="387"/>
    </location>
</feature>
<feature type="sequence variant" description="In strain: ATCC 51908.">
    <original>N</original>
    <variation>D</variation>
    <location>
        <position position="477"/>
    </location>
</feature>
<feature type="sequence variant" description="In strain: ATCC 51908.">
    <original>T</original>
    <variation>A</variation>
    <location>
        <position position="541"/>
    </location>
</feature>
<feature type="sequence variant" description="In strain: ATCC 51908.">
    <original>R</original>
    <variation>K</variation>
    <location>
        <position position="551"/>
    </location>
</feature>
<feature type="sequence variant" description="In strain: ATCC 51908.">
    <original>S</original>
    <variation>G</variation>
    <location>
        <position position="564"/>
    </location>
</feature>
<organismHost>
    <name type="scientific">Bos taurus</name>
    <name type="common">Bovine</name>
    <dbReference type="NCBI Taxonomy" id="9913"/>
</organismHost>
<proteinExistence type="evidence at protein level"/>
<keyword id="KW-0165">Cleavage on pair of basic residues</keyword>
<keyword id="KW-0175">Coiled coil</keyword>
<keyword id="KW-1015">Disulfide bond</keyword>
<keyword id="KW-1169">Fusion of virus membrane with host cell membrane</keyword>
<keyword id="KW-1168">Fusion of virus membrane with host membrane</keyword>
<keyword id="KW-0325">Glycoprotein</keyword>
<keyword id="KW-1032">Host cell membrane</keyword>
<keyword id="KW-1040">Host Golgi apparatus</keyword>
<keyword id="KW-1043">Host membrane</keyword>
<keyword id="KW-0945">Host-virus interaction</keyword>
<keyword id="KW-0449">Lipoprotein</keyword>
<keyword id="KW-0472">Membrane</keyword>
<keyword id="KW-0564">Palmitate</keyword>
<keyword id="KW-1185">Reference proteome</keyword>
<keyword id="KW-0732">Signal</keyword>
<keyword id="KW-1180">Syncytium formation induced by viral infection</keyword>
<keyword id="KW-0812">Transmembrane</keyword>
<keyword id="KW-1133">Transmembrane helix</keyword>
<keyword id="KW-1161">Viral attachment to host cell</keyword>
<keyword id="KW-1234">Viral attachment to host entry receptor</keyword>
<keyword id="KW-0261">Viral envelope protein</keyword>
<keyword id="KW-1162">Viral penetration into host cytoplasm</keyword>
<keyword id="KW-0946">Virion</keyword>
<keyword id="KW-1160">Virus entry into host cell</keyword>
<accession>P29791</accession>
<accession>Q8V688</accession>
<accession>Q8V691</accession>